<protein>
    <recommendedName>
        <fullName evidence="1">2-isopropylmalate synthase</fullName>
        <ecNumber evidence="1">2.3.3.13</ecNumber>
    </recommendedName>
    <alternativeName>
        <fullName evidence="1">Alpha-IPM synthase</fullName>
    </alternativeName>
    <alternativeName>
        <fullName evidence="1">Alpha-isopropylmalate synthase</fullName>
    </alternativeName>
</protein>
<keyword id="KW-0028">Amino-acid biosynthesis</keyword>
<keyword id="KW-0100">Branched-chain amino acid biosynthesis</keyword>
<keyword id="KW-0963">Cytoplasm</keyword>
<keyword id="KW-0432">Leucine biosynthesis</keyword>
<keyword id="KW-0464">Manganese</keyword>
<keyword id="KW-0479">Metal-binding</keyword>
<keyword id="KW-0808">Transferase</keyword>
<accession>Q31I16</accession>
<organism>
    <name type="scientific">Hydrogenovibrio crunogenus (strain DSM 25203 / XCL-2)</name>
    <name type="common">Thiomicrospira crunogena</name>
    <dbReference type="NCBI Taxonomy" id="317025"/>
    <lineage>
        <taxon>Bacteria</taxon>
        <taxon>Pseudomonadati</taxon>
        <taxon>Pseudomonadota</taxon>
        <taxon>Gammaproteobacteria</taxon>
        <taxon>Thiotrichales</taxon>
        <taxon>Piscirickettsiaceae</taxon>
        <taxon>Hydrogenovibrio</taxon>
    </lineage>
</organism>
<dbReference type="EC" id="2.3.3.13" evidence="1"/>
<dbReference type="EMBL" id="CP000109">
    <property type="protein sequence ID" value="ABB41207.1"/>
    <property type="molecule type" value="Genomic_DNA"/>
</dbReference>
<dbReference type="SMR" id="Q31I16"/>
<dbReference type="STRING" id="317025.Tcr_0611"/>
<dbReference type="KEGG" id="tcx:Tcr_0611"/>
<dbReference type="eggNOG" id="COG0119">
    <property type="taxonomic scope" value="Bacteria"/>
</dbReference>
<dbReference type="HOGENOM" id="CLU_022158_0_1_6"/>
<dbReference type="OrthoDB" id="9803573at2"/>
<dbReference type="UniPathway" id="UPA00048">
    <property type="reaction ID" value="UER00070"/>
</dbReference>
<dbReference type="GO" id="GO:0005829">
    <property type="term" value="C:cytosol"/>
    <property type="evidence" value="ECO:0007669"/>
    <property type="project" value="TreeGrafter"/>
</dbReference>
<dbReference type="GO" id="GO:0003852">
    <property type="term" value="F:2-isopropylmalate synthase activity"/>
    <property type="evidence" value="ECO:0007669"/>
    <property type="project" value="UniProtKB-UniRule"/>
</dbReference>
<dbReference type="GO" id="GO:0003985">
    <property type="term" value="F:acetyl-CoA C-acetyltransferase activity"/>
    <property type="evidence" value="ECO:0007669"/>
    <property type="project" value="UniProtKB-UniRule"/>
</dbReference>
<dbReference type="GO" id="GO:0030145">
    <property type="term" value="F:manganese ion binding"/>
    <property type="evidence" value="ECO:0007669"/>
    <property type="project" value="UniProtKB-UniRule"/>
</dbReference>
<dbReference type="GO" id="GO:0009098">
    <property type="term" value="P:L-leucine biosynthetic process"/>
    <property type="evidence" value="ECO:0007669"/>
    <property type="project" value="UniProtKB-UniRule"/>
</dbReference>
<dbReference type="CDD" id="cd07940">
    <property type="entry name" value="DRE_TIM_IPMS"/>
    <property type="match status" value="1"/>
</dbReference>
<dbReference type="FunFam" id="1.10.238.260:FF:000001">
    <property type="entry name" value="2-isopropylmalate synthase"/>
    <property type="match status" value="1"/>
</dbReference>
<dbReference type="FunFam" id="3.20.20.70:FF:000010">
    <property type="entry name" value="2-isopropylmalate synthase"/>
    <property type="match status" value="1"/>
</dbReference>
<dbReference type="FunFam" id="3.30.160.270:FF:000003">
    <property type="entry name" value="2-isopropylmalate synthase"/>
    <property type="match status" value="1"/>
</dbReference>
<dbReference type="Gene3D" id="1.10.238.260">
    <property type="match status" value="1"/>
</dbReference>
<dbReference type="Gene3D" id="3.30.160.270">
    <property type="match status" value="1"/>
</dbReference>
<dbReference type="Gene3D" id="3.20.20.70">
    <property type="entry name" value="Aldolase class I"/>
    <property type="match status" value="1"/>
</dbReference>
<dbReference type="HAMAP" id="MF_01025">
    <property type="entry name" value="LeuA_type1"/>
    <property type="match status" value="1"/>
</dbReference>
<dbReference type="InterPro" id="IPR050073">
    <property type="entry name" value="2-IPM_HCS-like"/>
</dbReference>
<dbReference type="InterPro" id="IPR013709">
    <property type="entry name" value="2-isopropylmalate_synth_dimer"/>
</dbReference>
<dbReference type="InterPro" id="IPR002034">
    <property type="entry name" value="AIPM/Hcit_synth_CS"/>
</dbReference>
<dbReference type="InterPro" id="IPR013785">
    <property type="entry name" value="Aldolase_TIM"/>
</dbReference>
<dbReference type="InterPro" id="IPR054691">
    <property type="entry name" value="LeuA/HCS_post-cat"/>
</dbReference>
<dbReference type="InterPro" id="IPR036230">
    <property type="entry name" value="LeuA_allosteric_dom_sf"/>
</dbReference>
<dbReference type="InterPro" id="IPR005671">
    <property type="entry name" value="LeuA_bact_synth"/>
</dbReference>
<dbReference type="InterPro" id="IPR000891">
    <property type="entry name" value="PYR_CT"/>
</dbReference>
<dbReference type="NCBIfam" id="TIGR00973">
    <property type="entry name" value="leuA_bact"/>
    <property type="match status" value="1"/>
</dbReference>
<dbReference type="NCBIfam" id="NF002086">
    <property type="entry name" value="PRK00915.1-3"/>
    <property type="match status" value="1"/>
</dbReference>
<dbReference type="NCBIfam" id="NF002087">
    <property type="entry name" value="PRK00915.1-4"/>
    <property type="match status" value="1"/>
</dbReference>
<dbReference type="PANTHER" id="PTHR10277:SF9">
    <property type="entry name" value="2-ISOPROPYLMALATE SYNTHASE 1, CHLOROPLASTIC-RELATED"/>
    <property type="match status" value="1"/>
</dbReference>
<dbReference type="PANTHER" id="PTHR10277">
    <property type="entry name" value="HOMOCITRATE SYNTHASE-RELATED"/>
    <property type="match status" value="1"/>
</dbReference>
<dbReference type="Pfam" id="PF22617">
    <property type="entry name" value="HCS_D2"/>
    <property type="match status" value="1"/>
</dbReference>
<dbReference type="Pfam" id="PF00682">
    <property type="entry name" value="HMGL-like"/>
    <property type="match status" value="1"/>
</dbReference>
<dbReference type="Pfam" id="PF08502">
    <property type="entry name" value="LeuA_dimer"/>
    <property type="match status" value="1"/>
</dbReference>
<dbReference type="SMART" id="SM00917">
    <property type="entry name" value="LeuA_dimer"/>
    <property type="match status" value="1"/>
</dbReference>
<dbReference type="SUPFAM" id="SSF110921">
    <property type="entry name" value="2-isopropylmalate synthase LeuA, allosteric (dimerisation) domain"/>
    <property type="match status" value="1"/>
</dbReference>
<dbReference type="SUPFAM" id="SSF51569">
    <property type="entry name" value="Aldolase"/>
    <property type="match status" value="1"/>
</dbReference>
<dbReference type="PROSITE" id="PS00815">
    <property type="entry name" value="AIPM_HOMOCIT_SYNTH_1"/>
    <property type="match status" value="1"/>
</dbReference>
<dbReference type="PROSITE" id="PS00816">
    <property type="entry name" value="AIPM_HOMOCIT_SYNTH_2"/>
    <property type="match status" value="1"/>
</dbReference>
<dbReference type="PROSITE" id="PS50991">
    <property type="entry name" value="PYR_CT"/>
    <property type="match status" value="1"/>
</dbReference>
<evidence type="ECO:0000255" key="1">
    <source>
        <dbReference type="HAMAP-Rule" id="MF_01025"/>
    </source>
</evidence>
<sequence>MKEELVIFDTTLRDGEQSPGASMTKEEKVRIAKQLEKLRVNVIEAGFPAASQGDFESVQAVASAVKDSTVCGLARAVENDIVRAGEAIKLANSGRIHTFIATSPIHMEKKLKMSPDEVVERAVWAVKRARDFTDNVEFSPEDAGRSELDFLCRVIEAAIDAGATTINIPDTVGYNVPEQFGELFHQLLNRIPNADKAIFSAHCHNDLGLAVANSLAAVKSGARQVECTINGLGERAGNTALEEVVMAVRTRQDWFDVDTRIHTPEILAASRLVAGITGFAVQPNKAIVGTNAFSHESGIHQDGVLKHRETYEIMRAEDVGWSTNKMVLGKHSGRSAFRSRLKELGIEFETEQELSDAFISFKELADRKHEIYDEDIQALVTDNNTRRVENETFRLVALKVGTQTGDAPTATITLWIDGEEKTASSEGGGVVDATFKAIEKLVDSGATLELYSVSNVTNGTDSLGETTVRMEKAGRIVNGQGADTDIVTASAKAYINALNKLIDTGSKEHPQAHV</sequence>
<comment type="function">
    <text evidence="1">Catalyzes the condensation of the acetyl group of acetyl-CoA with 3-methyl-2-oxobutanoate (2-ketoisovalerate) to form 3-carboxy-3-hydroxy-4-methylpentanoate (2-isopropylmalate).</text>
</comment>
<comment type="catalytic activity">
    <reaction evidence="1">
        <text>3-methyl-2-oxobutanoate + acetyl-CoA + H2O = (2S)-2-isopropylmalate + CoA + H(+)</text>
        <dbReference type="Rhea" id="RHEA:21524"/>
        <dbReference type="ChEBI" id="CHEBI:1178"/>
        <dbReference type="ChEBI" id="CHEBI:11851"/>
        <dbReference type="ChEBI" id="CHEBI:15377"/>
        <dbReference type="ChEBI" id="CHEBI:15378"/>
        <dbReference type="ChEBI" id="CHEBI:57287"/>
        <dbReference type="ChEBI" id="CHEBI:57288"/>
        <dbReference type="EC" id="2.3.3.13"/>
    </reaction>
</comment>
<comment type="cofactor">
    <cofactor evidence="1">
        <name>Mn(2+)</name>
        <dbReference type="ChEBI" id="CHEBI:29035"/>
    </cofactor>
</comment>
<comment type="pathway">
    <text evidence="1">Amino-acid biosynthesis; L-leucine biosynthesis; L-leucine from 3-methyl-2-oxobutanoate: step 1/4.</text>
</comment>
<comment type="subunit">
    <text evidence="1">Homodimer.</text>
</comment>
<comment type="subcellular location">
    <subcellularLocation>
        <location evidence="1">Cytoplasm</location>
    </subcellularLocation>
</comment>
<comment type="similarity">
    <text evidence="1">Belongs to the alpha-IPM synthase/homocitrate synthase family. LeuA type 1 subfamily.</text>
</comment>
<gene>
    <name evidence="1" type="primary">leuA</name>
    <name type="ordered locus">Tcr_0611</name>
</gene>
<reference key="1">
    <citation type="journal article" date="2006" name="PLoS Biol.">
        <title>The genome of deep-sea vent chemolithoautotroph Thiomicrospira crunogena XCL-2.</title>
        <authorList>
            <person name="Scott K.M."/>
            <person name="Sievert S.M."/>
            <person name="Abril F.N."/>
            <person name="Ball L.A."/>
            <person name="Barrett C.J."/>
            <person name="Blake R.A."/>
            <person name="Boller A.J."/>
            <person name="Chain P.S.G."/>
            <person name="Clark J.A."/>
            <person name="Davis C.R."/>
            <person name="Detter C."/>
            <person name="Do K.F."/>
            <person name="Dobrinski K.P."/>
            <person name="Faza B.I."/>
            <person name="Fitzpatrick K.A."/>
            <person name="Freyermuth S.K."/>
            <person name="Harmer T.L."/>
            <person name="Hauser L.J."/>
            <person name="Huegler M."/>
            <person name="Kerfeld C.A."/>
            <person name="Klotz M.G."/>
            <person name="Kong W.W."/>
            <person name="Land M."/>
            <person name="Lapidus A."/>
            <person name="Larimer F.W."/>
            <person name="Longo D.L."/>
            <person name="Lucas S."/>
            <person name="Malfatti S.A."/>
            <person name="Massey S.E."/>
            <person name="Martin D.D."/>
            <person name="McCuddin Z."/>
            <person name="Meyer F."/>
            <person name="Moore J.L."/>
            <person name="Ocampo L.H. Jr."/>
            <person name="Paul J.H."/>
            <person name="Paulsen I.T."/>
            <person name="Reep D.K."/>
            <person name="Ren Q."/>
            <person name="Ross R.L."/>
            <person name="Sato P.Y."/>
            <person name="Thomas P."/>
            <person name="Tinkham L.E."/>
            <person name="Zeruth G.T."/>
        </authorList>
    </citation>
    <scope>NUCLEOTIDE SEQUENCE [LARGE SCALE GENOMIC DNA]</scope>
    <source>
        <strain>DSM 25203 / XCL-2</strain>
    </source>
</reference>
<feature type="chain" id="PRO_1000149322" description="2-isopropylmalate synthase">
    <location>
        <begin position="1"/>
        <end position="514"/>
    </location>
</feature>
<feature type="domain" description="Pyruvate carboxyltransferase" evidence="1">
    <location>
        <begin position="5"/>
        <end position="267"/>
    </location>
</feature>
<feature type="region of interest" description="Regulatory domain" evidence="1">
    <location>
        <begin position="394"/>
        <end position="514"/>
    </location>
</feature>
<feature type="binding site" evidence="1">
    <location>
        <position position="14"/>
    </location>
    <ligand>
        <name>Mn(2+)</name>
        <dbReference type="ChEBI" id="CHEBI:29035"/>
    </ligand>
</feature>
<feature type="binding site" evidence="1">
    <location>
        <position position="202"/>
    </location>
    <ligand>
        <name>Mn(2+)</name>
        <dbReference type="ChEBI" id="CHEBI:29035"/>
    </ligand>
</feature>
<feature type="binding site" evidence="1">
    <location>
        <position position="204"/>
    </location>
    <ligand>
        <name>Mn(2+)</name>
        <dbReference type="ChEBI" id="CHEBI:29035"/>
    </ligand>
</feature>
<feature type="binding site" evidence="1">
    <location>
        <position position="238"/>
    </location>
    <ligand>
        <name>Mn(2+)</name>
        <dbReference type="ChEBI" id="CHEBI:29035"/>
    </ligand>
</feature>
<proteinExistence type="inferred from homology"/>
<name>LEU1_HYDCU</name>